<keyword id="KW-0150">Chloroplast</keyword>
<keyword id="KW-0472">Membrane</keyword>
<keyword id="KW-0934">Plastid</keyword>
<keyword id="KW-1001">Plastid inner membrane</keyword>
<keyword id="KW-0653">Protein transport</keyword>
<keyword id="KW-0812">Transmembrane</keyword>
<keyword id="KW-1133">Transmembrane helix</keyword>
<keyword id="KW-0813">Transport</keyword>
<dbReference type="EMBL" id="DQ359689">
    <property type="protein sequence ID" value="ABC70801.2"/>
    <property type="molecule type" value="Genomic_DNA"/>
</dbReference>
<dbReference type="RefSeq" id="YP_001004231.2">
    <property type="nucleotide sequence ID" value="NC_008796.1"/>
</dbReference>
<dbReference type="GeneID" id="4712183"/>
<dbReference type="GO" id="GO:0009706">
    <property type="term" value="C:chloroplast inner membrane"/>
    <property type="evidence" value="ECO:0007669"/>
    <property type="project" value="UniProtKB-SubCell"/>
</dbReference>
<dbReference type="GO" id="GO:0015031">
    <property type="term" value="P:protein transport"/>
    <property type="evidence" value="ECO:0007669"/>
    <property type="project" value="UniProtKB-KW"/>
</dbReference>
<dbReference type="InterPro" id="IPR008896">
    <property type="entry name" value="TIC214"/>
</dbReference>
<dbReference type="PANTHER" id="PTHR33163:SF40">
    <property type="entry name" value="PROTEIN TIC 214"/>
    <property type="match status" value="1"/>
</dbReference>
<dbReference type="PANTHER" id="PTHR33163">
    <property type="entry name" value="PROTEIN TIC 214-RELATED"/>
    <property type="match status" value="1"/>
</dbReference>
<dbReference type="Pfam" id="PF05758">
    <property type="entry name" value="Ycf1"/>
    <property type="match status" value="2"/>
</dbReference>
<proteinExistence type="inferred from homology"/>
<organism>
    <name type="scientific">Ranunculus macranthus</name>
    <name type="common">Large buttercup</name>
    <dbReference type="NCBI Taxonomy" id="334596"/>
    <lineage>
        <taxon>Eukaryota</taxon>
        <taxon>Viridiplantae</taxon>
        <taxon>Streptophyta</taxon>
        <taxon>Embryophyta</taxon>
        <taxon>Tracheophyta</taxon>
        <taxon>Spermatophyta</taxon>
        <taxon>Magnoliopsida</taxon>
        <taxon>Ranunculales</taxon>
        <taxon>Ranunculaceae</taxon>
        <taxon>Ranunculoideae</taxon>
        <taxon>Ranunculeae</taxon>
        <taxon>Ranunculus</taxon>
    </lineage>
</organism>
<evidence type="ECO:0000250" key="1">
    <source>
        <dbReference type="UniProtKB" id="P56785"/>
    </source>
</evidence>
<evidence type="ECO:0000255" key="2"/>
<evidence type="ECO:0000256" key="3">
    <source>
        <dbReference type="SAM" id="MobiDB-lite"/>
    </source>
</evidence>
<evidence type="ECO:0000305" key="4"/>
<reference key="1">
    <citation type="journal article" date="2007" name="BMC Genomics">
        <title>Comparative chloroplast genomics: analyses including new sequences from the angiosperms Nuphar advena and Ranunculus macranthus.</title>
        <authorList>
            <person name="Raubeson L.A."/>
            <person name="Peery R."/>
            <person name="Chumley T.W."/>
            <person name="Dziubek C."/>
            <person name="Fourcade H.M."/>
            <person name="Boore J.L."/>
            <person name="Jansen R.K."/>
        </authorList>
    </citation>
    <scope>NUCLEOTIDE SEQUENCE [LARGE SCALE GENOMIC DNA]</scope>
</reference>
<comment type="function">
    <text evidence="1">Involved in protein precursor import into chloroplasts. May be part of an intermediate translocation complex acting as a protein-conducting channel at the inner envelope.</text>
</comment>
<comment type="subunit">
    <text evidence="1">Part of the Tic complex.</text>
</comment>
<comment type="subcellular location">
    <subcellularLocation>
        <location evidence="1">Plastid</location>
        <location evidence="1">Chloroplast inner membrane</location>
        <topology evidence="2">Multi-pass membrane protein</topology>
    </subcellularLocation>
</comment>
<comment type="similarity">
    <text evidence="4">Belongs to the TIC214 family.</text>
</comment>
<protein>
    <recommendedName>
        <fullName evidence="1">Protein TIC 214</fullName>
    </recommendedName>
    <alternativeName>
        <fullName evidence="1">Translocon at the inner envelope membrane of chloroplasts 214</fullName>
        <shortName evidence="1">AtTIC214</shortName>
    </alternativeName>
</protein>
<name>TI214_RANMC</name>
<sequence>MNINNYSITLILLIKSNLVSSCMKIINSVVVVGLYYGFFTTFSIGPSYFFLLRARVLEVGDEKEISATTIGFIAGQLMMFISIYYAPLHLALRKPHTITALVLPYLLFHFFWNNHKNFFDSVYTTGNSMRNLNIQCIFLNSLIFQLFNHFILPSSTLARLINIYMFRYNNKMLFVASSFVGWLVGHIFFMKWVELVLFWIRQNHLIRSNKYLVSELKNSMSRIFSILLFIVCIYYLGRMPSPLVTKKLKKTSKREERGKNKEETDVEIEKISEEKGTNEQQEGSAEEDPSLCSEEKEGLDKIDETEEIQVNLNGREKTKDEFNKEKYSKNSPVCENYDLDGNQDNFELKKKEKEKKNIFWFEKPLVTLLFDYKRWNRPLRYIKNDFFENAVRNEMSQYFFYTCQSDGKQKISFTYLPSLSTFLEMIQQKMLLCITEKRSYEESYNNWVYTNDEKKKNLSNELFNRIAVLDKGFLVTDVLEKRTRLCNYENEQECLPKIYDPLLNGPYRGTIKELYSRSSMNEYLIPSIEDPRDTIWINKLYDIFPTDFKELKKKKIGKRINEIKKKVFQWSYKLIDDLEEEEEEEETTEDRGIRSRKAKRVVIFNDNETTKNNASNRDQVDEVALISYSQQSDFRRDIIKGSMRAQRRKTVTWKLFQTRVHSPLFLDRIDKIFVLSFDIDRILNFIFRNWMVEVTEFKIMDSEEQKAKKKDKKKKENERITIAETWDTVLFAQTIRGCILVIQSILRKLIVLPSLIIAKNIGHMLVFKPTEWHEDFEELNKEIHVKCTYNGVQLSENEFPKNWLTDGIQIKILFPFCLKSRHRSKLQPEDSLKKKGKKQNFYFLTVWGMEAELPFGSPRKGPSFFETIWKQLKKKHKKVKVKSFVAVKIIKERTKWFGKVSNEKTKWVTKKVQFIKKIMKELTKRNSISLFELKKVSESNSNRNKTEKFSIISNKMIPEFAIRIRSIDWTNYSLTEKKMKDMADRINTIRNQIEKITKDKKSIFLTTTTDRNIRPNKTSWDDKRLEQSKIFWQIVKRGRAKIIRKCNFFFHFCIEKICIDIFLSIINIPSRNIQILFQQKKKINDKYSYNDETKKNPIHFISTIKRSIYKTTNTSNKSQILCDLSFLSQAYVFYKLSQIQVSNKYNLKSLFQYHGTIPFIKDKIKIFFGTQGIFNSESRHKNFHDFGMNEWQSWLMGNDQYQYNLSQTCWSGLVPQKWRNRINKNLANSSNFYFYEKEPLIHYEKEKNYAVNSLPSRREKLKNYKYDLLSNKYINYENNSSSSFYGLPLEVNQAHAILYNYNTYNSEVFDLSGDIDFRNYLREDYDIDRDQNSDRKYLDWRTFNFCLRKKRNIAEWTNIDIGTSTTITKKIKSQIHYYQIIDKLEKNKTDNKGFLNLAIYKQIDSANQTKVFFDWMGMNEEILNWSILNRELWFFPEFLLLYDAYKIQPWIIPLNLLLLKLNINEKQKGDLHISYNKNKSLDLENRNQEETQQPVRGDLGSYVQKENNPGSDPLKKQTDGKEDFDRSNIQRNINKKKSKSNIAAELDFFLKKYFLFQLRWDNSFSEKIINNIKIYCLLLRLKNPKEIAISSIQRDEMSMDVMLVPKATTFIKLRKRRLLLIEPARLSINWDGLFIMYQTLVILQVHNSKYQTCKKKINVDNKGLIESMARHEILFRNRDKNNYDFLIPENLLSSRRRRELRIQICLNLRNFKVGDRNREFSNENSTRSCDLFFYEDKNLDVDIKKILKFKFFLWPNYRLEDLACMNRYWFDTNNGSRFSMSRIHMYPY</sequence>
<accession>A1XGT3</accession>
<geneLocation type="chloroplast"/>
<feature type="chain" id="PRO_0000326586" description="Protein TIC 214">
    <location>
        <begin position="1"/>
        <end position="1788"/>
    </location>
</feature>
<feature type="transmembrane region" description="Helical" evidence="2">
    <location>
        <begin position="25"/>
        <end position="45"/>
    </location>
</feature>
<feature type="transmembrane region" description="Helical" evidence="2">
    <location>
        <begin position="70"/>
        <end position="90"/>
    </location>
</feature>
<feature type="transmembrane region" description="Helical" evidence="2">
    <location>
        <begin position="95"/>
        <end position="115"/>
    </location>
</feature>
<feature type="transmembrane region" description="Helical" evidence="2">
    <location>
        <begin position="132"/>
        <end position="152"/>
    </location>
</feature>
<feature type="transmembrane region" description="Helical" evidence="2">
    <location>
        <begin position="180"/>
        <end position="200"/>
    </location>
</feature>
<feature type="transmembrane region" description="Helical" evidence="2">
    <location>
        <begin position="223"/>
        <end position="243"/>
    </location>
</feature>
<feature type="region of interest" description="Disordered" evidence="3">
    <location>
        <begin position="248"/>
        <end position="297"/>
    </location>
</feature>
<feature type="region of interest" description="Disordered" evidence="3">
    <location>
        <begin position="1482"/>
        <end position="1526"/>
    </location>
</feature>
<feature type="compositionally biased region" description="Basic and acidic residues" evidence="3">
    <location>
        <begin position="253"/>
        <end position="277"/>
    </location>
</feature>
<feature type="compositionally biased region" description="Basic and acidic residues" evidence="3">
    <location>
        <begin position="1513"/>
        <end position="1526"/>
    </location>
</feature>
<gene>
    <name evidence="1" type="primary">TIC214</name>
    <name type="synonym">ycf1</name>
</gene>